<keyword id="KW-1185">Reference proteome</keyword>
<keyword id="KW-0687">Ribonucleoprotein</keyword>
<keyword id="KW-0689">Ribosomal protein</keyword>
<keyword id="KW-0694">RNA-binding</keyword>
<keyword id="KW-0699">rRNA-binding</keyword>
<comment type="function">
    <text evidence="1">Binds directly to 16S ribosomal RNA.</text>
</comment>
<comment type="similarity">
    <text evidence="1">Belongs to the bacterial ribosomal protein bS20 family.</text>
</comment>
<sequence length="86" mass="9794">MANSASSRKRARQAVKRNKHNSQIRAKVRTFIKKVTYALEAGNKEQAQNCFTIMQKMLDQAVNKGLIHKNQAARKKSRLNSQIKAL</sequence>
<protein>
    <recommendedName>
        <fullName evidence="1">Small ribosomal subunit protein bS20</fullName>
    </recommendedName>
    <alternativeName>
        <fullName evidence="3">30S ribosomal protein S20</fullName>
    </alternativeName>
</protein>
<organism>
    <name type="scientific">Vesicomyosocius okutanii subsp. Calyptogena okutanii (strain HA)</name>
    <dbReference type="NCBI Taxonomy" id="412965"/>
    <lineage>
        <taxon>Bacteria</taxon>
        <taxon>Pseudomonadati</taxon>
        <taxon>Pseudomonadota</taxon>
        <taxon>Gammaproteobacteria</taxon>
        <taxon>Candidatus Pseudothioglobaceae</taxon>
        <taxon>Candidatus Vesicomyosocius</taxon>
    </lineage>
</organism>
<name>RS20_VESOH</name>
<feature type="chain" id="PRO_1000014674" description="Small ribosomal subunit protein bS20">
    <location>
        <begin position="1"/>
        <end position="86"/>
    </location>
</feature>
<feature type="region of interest" description="Disordered" evidence="2">
    <location>
        <begin position="1"/>
        <end position="25"/>
    </location>
</feature>
<feature type="compositionally biased region" description="Basic residues" evidence="2">
    <location>
        <begin position="7"/>
        <end position="25"/>
    </location>
</feature>
<dbReference type="EMBL" id="AP009247">
    <property type="protein sequence ID" value="BAF61805.1"/>
    <property type="molecule type" value="Genomic_DNA"/>
</dbReference>
<dbReference type="RefSeq" id="WP_011930075.1">
    <property type="nucleotide sequence ID" value="NC_009465.1"/>
</dbReference>
<dbReference type="SMR" id="A5CW82"/>
<dbReference type="STRING" id="412965.COSY_0693"/>
<dbReference type="KEGG" id="vok:COSY_0693"/>
<dbReference type="eggNOG" id="COG0268">
    <property type="taxonomic scope" value="Bacteria"/>
</dbReference>
<dbReference type="HOGENOM" id="CLU_160655_4_0_6"/>
<dbReference type="OrthoDB" id="9807974at2"/>
<dbReference type="Proteomes" id="UP000000247">
    <property type="component" value="Chromosome"/>
</dbReference>
<dbReference type="GO" id="GO:0005829">
    <property type="term" value="C:cytosol"/>
    <property type="evidence" value="ECO:0007669"/>
    <property type="project" value="TreeGrafter"/>
</dbReference>
<dbReference type="GO" id="GO:0015935">
    <property type="term" value="C:small ribosomal subunit"/>
    <property type="evidence" value="ECO:0007669"/>
    <property type="project" value="TreeGrafter"/>
</dbReference>
<dbReference type="GO" id="GO:0070181">
    <property type="term" value="F:small ribosomal subunit rRNA binding"/>
    <property type="evidence" value="ECO:0007669"/>
    <property type="project" value="TreeGrafter"/>
</dbReference>
<dbReference type="GO" id="GO:0003735">
    <property type="term" value="F:structural constituent of ribosome"/>
    <property type="evidence" value="ECO:0007669"/>
    <property type="project" value="InterPro"/>
</dbReference>
<dbReference type="GO" id="GO:0006412">
    <property type="term" value="P:translation"/>
    <property type="evidence" value="ECO:0007669"/>
    <property type="project" value="UniProtKB-UniRule"/>
</dbReference>
<dbReference type="FunFam" id="1.20.58.110:FF:000001">
    <property type="entry name" value="30S ribosomal protein S20"/>
    <property type="match status" value="1"/>
</dbReference>
<dbReference type="Gene3D" id="1.20.58.110">
    <property type="entry name" value="Ribosomal protein S20"/>
    <property type="match status" value="1"/>
</dbReference>
<dbReference type="HAMAP" id="MF_00500">
    <property type="entry name" value="Ribosomal_bS20"/>
    <property type="match status" value="1"/>
</dbReference>
<dbReference type="InterPro" id="IPR002583">
    <property type="entry name" value="Ribosomal_bS20"/>
</dbReference>
<dbReference type="InterPro" id="IPR036510">
    <property type="entry name" value="Ribosomal_bS20_sf"/>
</dbReference>
<dbReference type="NCBIfam" id="TIGR00029">
    <property type="entry name" value="S20"/>
    <property type="match status" value="1"/>
</dbReference>
<dbReference type="PANTHER" id="PTHR33398">
    <property type="entry name" value="30S RIBOSOMAL PROTEIN S20"/>
    <property type="match status" value="1"/>
</dbReference>
<dbReference type="PANTHER" id="PTHR33398:SF1">
    <property type="entry name" value="SMALL RIBOSOMAL SUBUNIT PROTEIN BS20C"/>
    <property type="match status" value="1"/>
</dbReference>
<dbReference type="Pfam" id="PF01649">
    <property type="entry name" value="Ribosomal_S20p"/>
    <property type="match status" value="1"/>
</dbReference>
<dbReference type="SUPFAM" id="SSF46992">
    <property type="entry name" value="Ribosomal protein S20"/>
    <property type="match status" value="1"/>
</dbReference>
<accession>A5CW82</accession>
<evidence type="ECO:0000255" key="1">
    <source>
        <dbReference type="HAMAP-Rule" id="MF_00500"/>
    </source>
</evidence>
<evidence type="ECO:0000256" key="2">
    <source>
        <dbReference type="SAM" id="MobiDB-lite"/>
    </source>
</evidence>
<evidence type="ECO:0000305" key="3"/>
<reference key="1">
    <citation type="journal article" date="2007" name="Curr. Biol.">
        <title>Reduced genome of the thioautotrophic intracellular symbiont in a deep-sea clam, Calyptogena okutanii.</title>
        <authorList>
            <person name="Kuwahara H."/>
            <person name="Yoshida T."/>
            <person name="Takaki Y."/>
            <person name="Shimamura S."/>
            <person name="Nishi S."/>
            <person name="Harada M."/>
            <person name="Matsuyama K."/>
            <person name="Takishita K."/>
            <person name="Kawato M."/>
            <person name="Uematsu K."/>
            <person name="Fujiwara Y."/>
            <person name="Sato T."/>
            <person name="Kato C."/>
            <person name="Kitagawa M."/>
            <person name="Kato I."/>
            <person name="Maruyama T."/>
        </authorList>
    </citation>
    <scope>NUCLEOTIDE SEQUENCE [LARGE SCALE GENOMIC DNA]</scope>
    <source>
        <strain>HA</strain>
    </source>
</reference>
<proteinExistence type="inferred from homology"/>
<gene>
    <name evidence="1" type="primary">rpsT</name>
    <name type="ordered locus">COSY_0693</name>
</gene>